<accession>Q87S36</accession>
<name>TGT_VIBPA</name>
<organism>
    <name type="scientific">Vibrio parahaemolyticus serotype O3:K6 (strain RIMD 2210633)</name>
    <dbReference type="NCBI Taxonomy" id="223926"/>
    <lineage>
        <taxon>Bacteria</taxon>
        <taxon>Pseudomonadati</taxon>
        <taxon>Pseudomonadota</taxon>
        <taxon>Gammaproteobacteria</taxon>
        <taxon>Vibrionales</taxon>
        <taxon>Vibrionaceae</taxon>
        <taxon>Vibrio</taxon>
    </lineage>
</organism>
<feature type="chain" id="PRO_0000135552" description="Queuine tRNA-ribosyltransferase">
    <location>
        <begin position="1"/>
        <end position="377"/>
    </location>
</feature>
<feature type="region of interest" description="RNA binding" evidence="1">
    <location>
        <begin position="247"/>
        <end position="253"/>
    </location>
</feature>
<feature type="region of interest" description="RNA binding; important for wobble base 34 recognition" evidence="1">
    <location>
        <begin position="271"/>
        <end position="275"/>
    </location>
</feature>
<feature type="active site" description="Proton acceptor" evidence="1">
    <location>
        <position position="91"/>
    </location>
</feature>
<feature type="active site" description="Nucleophile" evidence="1">
    <location>
        <position position="266"/>
    </location>
</feature>
<feature type="binding site" evidence="1">
    <location>
        <begin position="91"/>
        <end position="95"/>
    </location>
    <ligand>
        <name>substrate</name>
    </ligand>
</feature>
<feature type="binding site" evidence="1">
    <location>
        <position position="145"/>
    </location>
    <ligand>
        <name>substrate</name>
    </ligand>
</feature>
<feature type="binding site" evidence="1">
    <location>
        <position position="189"/>
    </location>
    <ligand>
        <name>substrate</name>
    </ligand>
</feature>
<feature type="binding site" evidence="1">
    <location>
        <position position="216"/>
    </location>
    <ligand>
        <name>substrate</name>
    </ligand>
</feature>
<feature type="binding site" evidence="1">
    <location>
        <position position="304"/>
    </location>
    <ligand>
        <name>Zn(2+)</name>
        <dbReference type="ChEBI" id="CHEBI:29105"/>
    </ligand>
</feature>
<feature type="binding site" evidence="1">
    <location>
        <position position="306"/>
    </location>
    <ligand>
        <name>Zn(2+)</name>
        <dbReference type="ChEBI" id="CHEBI:29105"/>
    </ligand>
</feature>
<feature type="binding site" evidence="1">
    <location>
        <position position="309"/>
    </location>
    <ligand>
        <name>Zn(2+)</name>
        <dbReference type="ChEBI" id="CHEBI:29105"/>
    </ligand>
</feature>
<feature type="binding site" evidence="1">
    <location>
        <position position="335"/>
    </location>
    <ligand>
        <name>Zn(2+)</name>
        <dbReference type="ChEBI" id="CHEBI:29105"/>
    </ligand>
</feature>
<protein>
    <recommendedName>
        <fullName evidence="1">Queuine tRNA-ribosyltransferase</fullName>
        <ecNumber evidence="1">2.4.2.29</ecNumber>
    </recommendedName>
    <alternativeName>
        <fullName evidence="1">Guanine insertion enzyme</fullName>
    </alternativeName>
    <alternativeName>
        <fullName evidence="1">tRNA-guanine transglycosylase</fullName>
    </alternativeName>
</protein>
<reference key="1">
    <citation type="journal article" date="2003" name="Lancet">
        <title>Genome sequence of Vibrio parahaemolyticus: a pathogenic mechanism distinct from that of V. cholerae.</title>
        <authorList>
            <person name="Makino K."/>
            <person name="Oshima K."/>
            <person name="Kurokawa K."/>
            <person name="Yokoyama K."/>
            <person name="Uda T."/>
            <person name="Tagomori K."/>
            <person name="Iijima Y."/>
            <person name="Najima M."/>
            <person name="Nakano M."/>
            <person name="Yamashita A."/>
            <person name="Kubota Y."/>
            <person name="Kimura S."/>
            <person name="Yasunaga T."/>
            <person name="Honda T."/>
            <person name="Shinagawa H."/>
            <person name="Hattori M."/>
            <person name="Iida T."/>
        </authorList>
    </citation>
    <scope>NUCLEOTIDE SEQUENCE [LARGE SCALE GENOMIC DNA]</scope>
    <source>
        <strain>RIMD 2210633</strain>
    </source>
</reference>
<evidence type="ECO:0000255" key="1">
    <source>
        <dbReference type="HAMAP-Rule" id="MF_00168"/>
    </source>
</evidence>
<gene>
    <name evidence="1" type="primary">tgt</name>
    <name type="ordered locus">VP0588</name>
</gene>
<dbReference type="EC" id="2.4.2.29" evidence="1"/>
<dbReference type="EMBL" id="BA000031">
    <property type="protein sequence ID" value="BAC58851.1"/>
    <property type="molecule type" value="Genomic_DNA"/>
</dbReference>
<dbReference type="RefSeq" id="NP_796967.1">
    <property type="nucleotide sequence ID" value="NC_004603.1"/>
</dbReference>
<dbReference type="RefSeq" id="WP_005460199.1">
    <property type="nucleotide sequence ID" value="NC_004603.1"/>
</dbReference>
<dbReference type="SMR" id="Q87S36"/>
<dbReference type="GeneID" id="1188063"/>
<dbReference type="KEGG" id="vpa:VP0588"/>
<dbReference type="PATRIC" id="fig|223926.6.peg.558"/>
<dbReference type="eggNOG" id="COG0343">
    <property type="taxonomic scope" value="Bacteria"/>
</dbReference>
<dbReference type="HOGENOM" id="CLU_022060_0_1_6"/>
<dbReference type="UniPathway" id="UPA00392"/>
<dbReference type="Proteomes" id="UP000002493">
    <property type="component" value="Chromosome 1"/>
</dbReference>
<dbReference type="GO" id="GO:0005829">
    <property type="term" value="C:cytosol"/>
    <property type="evidence" value="ECO:0007669"/>
    <property type="project" value="TreeGrafter"/>
</dbReference>
<dbReference type="GO" id="GO:0046872">
    <property type="term" value="F:metal ion binding"/>
    <property type="evidence" value="ECO:0007669"/>
    <property type="project" value="UniProtKB-KW"/>
</dbReference>
<dbReference type="GO" id="GO:0008479">
    <property type="term" value="F:tRNA-guanosine(34) queuine transglycosylase activity"/>
    <property type="evidence" value="ECO:0007669"/>
    <property type="project" value="UniProtKB-UniRule"/>
</dbReference>
<dbReference type="GO" id="GO:0008616">
    <property type="term" value="P:queuosine biosynthetic process"/>
    <property type="evidence" value="ECO:0007669"/>
    <property type="project" value="UniProtKB-UniRule"/>
</dbReference>
<dbReference type="GO" id="GO:0002099">
    <property type="term" value="P:tRNA wobble guanine modification"/>
    <property type="evidence" value="ECO:0007669"/>
    <property type="project" value="TreeGrafter"/>
</dbReference>
<dbReference type="GO" id="GO:0101030">
    <property type="term" value="P:tRNA-guanine transglycosylation"/>
    <property type="evidence" value="ECO:0007669"/>
    <property type="project" value="InterPro"/>
</dbReference>
<dbReference type="FunFam" id="3.20.20.105:FF:000001">
    <property type="entry name" value="Queuine tRNA-ribosyltransferase"/>
    <property type="match status" value="1"/>
</dbReference>
<dbReference type="Gene3D" id="3.20.20.105">
    <property type="entry name" value="Queuine tRNA-ribosyltransferase-like"/>
    <property type="match status" value="1"/>
</dbReference>
<dbReference type="HAMAP" id="MF_00168">
    <property type="entry name" value="Q_tRNA_Tgt"/>
    <property type="match status" value="1"/>
</dbReference>
<dbReference type="InterPro" id="IPR050076">
    <property type="entry name" value="ArchSynthase1/Queuine_TRR"/>
</dbReference>
<dbReference type="InterPro" id="IPR004803">
    <property type="entry name" value="TGT"/>
</dbReference>
<dbReference type="InterPro" id="IPR036511">
    <property type="entry name" value="TGT-like_sf"/>
</dbReference>
<dbReference type="InterPro" id="IPR002616">
    <property type="entry name" value="tRNA_ribo_trans-like"/>
</dbReference>
<dbReference type="NCBIfam" id="TIGR00430">
    <property type="entry name" value="Q_tRNA_tgt"/>
    <property type="match status" value="1"/>
</dbReference>
<dbReference type="NCBIfam" id="TIGR00449">
    <property type="entry name" value="tgt_general"/>
    <property type="match status" value="1"/>
</dbReference>
<dbReference type="PANTHER" id="PTHR46499">
    <property type="entry name" value="QUEUINE TRNA-RIBOSYLTRANSFERASE"/>
    <property type="match status" value="1"/>
</dbReference>
<dbReference type="PANTHER" id="PTHR46499:SF1">
    <property type="entry name" value="QUEUINE TRNA-RIBOSYLTRANSFERASE"/>
    <property type="match status" value="1"/>
</dbReference>
<dbReference type="Pfam" id="PF01702">
    <property type="entry name" value="TGT"/>
    <property type="match status" value="1"/>
</dbReference>
<dbReference type="SUPFAM" id="SSF51713">
    <property type="entry name" value="tRNA-guanine transglycosylase"/>
    <property type="match status" value="1"/>
</dbReference>
<proteinExistence type="inferred from homology"/>
<comment type="function">
    <text evidence="1">Catalyzes the base-exchange of a guanine (G) residue with the queuine precursor 7-aminomethyl-7-deazaguanine (PreQ1) at position 34 (anticodon wobble position) in tRNAs with GU(N) anticodons (tRNA-Asp, -Asn, -His and -Tyr). Catalysis occurs through a double-displacement mechanism. The nucleophile active site attacks the C1' of nucleotide 34 to detach the guanine base from the RNA, forming a covalent enzyme-RNA intermediate. The proton acceptor active site deprotonates the incoming PreQ1, allowing a nucleophilic attack on the C1' of the ribose to form the product. After dissociation, two additional enzymatic reactions on the tRNA convert PreQ1 to queuine (Q), resulting in the hypermodified nucleoside queuosine (7-(((4,5-cis-dihydroxy-2-cyclopenten-1-yl)amino)methyl)-7-deazaguanosine).</text>
</comment>
<comment type="catalytic activity">
    <reaction evidence="1">
        <text>7-aminomethyl-7-carbaguanine + guanosine(34) in tRNA = 7-aminomethyl-7-carbaguanosine(34) in tRNA + guanine</text>
        <dbReference type="Rhea" id="RHEA:24104"/>
        <dbReference type="Rhea" id="RHEA-COMP:10341"/>
        <dbReference type="Rhea" id="RHEA-COMP:10342"/>
        <dbReference type="ChEBI" id="CHEBI:16235"/>
        <dbReference type="ChEBI" id="CHEBI:58703"/>
        <dbReference type="ChEBI" id="CHEBI:74269"/>
        <dbReference type="ChEBI" id="CHEBI:82833"/>
        <dbReference type="EC" id="2.4.2.29"/>
    </reaction>
</comment>
<comment type="cofactor">
    <cofactor evidence="1">
        <name>Zn(2+)</name>
        <dbReference type="ChEBI" id="CHEBI:29105"/>
    </cofactor>
    <text evidence="1">Binds 1 zinc ion per subunit.</text>
</comment>
<comment type="pathway">
    <text evidence="1">tRNA modification; tRNA-queuosine biosynthesis.</text>
</comment>
<comment type="subunit">
    <text evidence="1">Homodimer. Within each dimer, one monomer is responsible for RNA recognition and catalysis, while the other monomer binds to the replacement base PreQ1.</text>
</comment>
<comment type="similarity">
    <text evidence="1">Belongs to the queuine tRNA-ribosyltransferase family.</text>
</comment>
<sequence>MKLKFDLKKKNGNARRGQLTFERGTVQTPAFMPVGTYGTVKGMTPEEVKGTGAEILLGNTFHLWLRPGQEVMKMHGDLHDFMNWHGPILTDSGGFQVFSLGKMRTITEKGVHFRNPVNGDKIFMDAEKSMEIQKDLGSDIVMIFDECTPYPATHNEAKKSMEMSLRWAQRSRDHFDKLENPNNLFGIVQGGVYEDLRDVSVKGLTEIGFDGYAVGGLAVGEPKEDMHRILEHTCPQLPEDKPRYLMGVGKPEDLVEGVRRGIDMFDCVMPTRNARNGHLFVTGGVIKIRNAKHKTDTTPLDPHCDCYTCQNYSKSYLHHLERCNEILGARLNTIHNLRYYQRLMESIRKAIDEDRFDEFVQEFYARRDREVPPLSKA</sequence>
<keyword id="KW-0328">Glycosyltransferase</keyword>
<keyword id="KW-0479">Metal-binding</keyword>
<keyword id="KW-0671">Queuosine biosynthesis</keyword>
<keyword id="KW-0808">Transferase</keyword>
<keyword id="KW-0819">tRNA processing</keyword>
<keyword id="KW-0862">Zinc</keyword>